<dbReference type="EMBL" id="KC503762">
    <property type="protein sequence ID" value="AGE11545.1"/>
    <property type="molecule type" value="Genomic_DNA"/>
</dbReference>
<dbReference type="EMBL" id="AB592928">
    <property type="protein sequence ID" value="BAJ78533.1"/>
    <property type="molecule type" value="Genomic_DNA"/>
</dbReference>
<dbReference type="SMR" id="P87730"/>
<dbReference type="GlyCosmos" id="P87730">
    <property type="glycosylation" value="10 sites, No reported glycans"/>
</dbReference>
<dbReference type="KEGG" id="vg:14536668"/>
<dbReference type="Proteomes" id="UP000102041">
    <property type="component" value="Segment"/>
</dbReference>
<dbReference type="Proteomes" id="UP000132784">
    <property type="component" value="Segment"/>
</dbReference>
<dbReference type="GO" id="GO:0044175">
    <property type="term" value="C:host cell endosome membrane"/>
    <property type="evidence" value="ECO:0007669"/>
    <property type="project" value="UniProtKB-SubCell"/>
</dbReference>
<dbReference type="GO" id="GO:0020002">
    <property type="term" value="C:host cell plasma membrane"/>
    <property type="evidence" value="ECO:0007669"/>
    <property type="project" value="UniProtKB-SubCell"/>
</dbReference>
<dbReference type="GO" id="GO:0016020">
    <property type="term" value="C:membrane"/>
    <property type="evidence" value="ECO:0007669"/>
    <property type="project" value="UniProtKB-KW"/>
</dbReference>
<dbReference type="GO" id="GO:0019031">
    <property type="term" value="C:viral envelope"/>
    <property type="evidence" value="ECO:0007669"/>
    <property type="project" value="UniProtKB-KW"/>
</dbReference>
<dbReference type="GO" id="GO:0055036">
    <property type="term" value="C:virion membrane"/>
    <property type="evidence" value="ECO:0007669"/>
    <property type="project" value="UniProtKB-SubCell"/>
</dbReference>
<dbReference type="GO" id="GO:0019064">
    <property type="term" value="P:fusion of virus membrane with host plasma membrane"/>
    <property type="evidence" value="ECO:0007669"/>
    <property type="project" value="UniProtKB-KW"/>
</dbReference>
<dbReference type="GO" id="GO:0046718">
    <property type="term" value="P:symbiont entry into host cell"/>
    <property type="evidence" value="ECO:0007669"/>
    <property type="project" value="UniProtKB-KW"/>
</dbReference>
<dbReference type="Gene3D" id="2.60.40.3190">
    <property type="entry name" value="Herpesvirus glycoprotein H, C-terminal domain"/>
    <property type="match status" value="1"/>
</dbReference>
<dbReference type="HAMAP" id="MF_04033">
    <property type="entry name" value="HSV_GH"/>
    <property type="match status" value="1"/>
</dbReference>
<dbReference type="InterPro" id="IPR003493">
    <property type="entry name" value="Herpes_gH"/>
</dbReference>
<dbReference type="InterPro" id="IPR035305">
    <property type="entry name" value="Herpes_glycoH_C"/>
</dbReference>
<dbReference type="InterPro" id="IPR038172">
    <property type="entry name" value="Herpes_glycoH_C_sf"/>
</dbReference>
<dbReference type="Pfam" id="PF17488">
    <property type="entry name" value="Herpes_glycoH_C"/>
    <property type="match status" value="1"/>
</dbReference>
<dbReference type="Pfam" id="PF02489">
    <property type="entry name" value="Herpes_glycop_H"/>
    <property type="match status" value="1"/>
</dbReference>
<sequence length="723" mass="81772">MSPATRFTVISCLVVSLITPSETSSWFDPFIEWARSSPNMTCVNNRTGTRSLATEGLISFNFYEASRTVRTYQVPKCIFMSSVSKTIMQGVDLFESLESYRRRYYSYIIVPVHASFQIFIHDLRTDLSSPTEELTSPVDKTLPNVTIWHTPSGYVIRLLDVVTPRFEECTLFPNHTVIFDMTVPCSQEVYLRQTGKHQFAIVLTFTPSFFVLNIQTAQHQHVTENDEDVILIFGDVRSIDVKAPYSKPVLTLRQSYRDDLLIVAKTSIVNATYPFIKTQDFLKGTLSGNYLDFNHVYTEFNRLVIHNLVEGLCDAPPDDRTVSMVFSYAVLARTLYHTSNVTARLEDVALRYVRLTLARTFLQQCFDVGPRYMRFPTIDGALSVLLKLIRNSRDVDGGLKLSLTFALIFGNNTDMTKERDLENALYEMKSIHRAGLVSPLSPRQRSLLYMMAYVTHHTTAFPDIRREMLAMQTSLCSPQELYNWAPHVSSAGLTMQEMFTPCSGSGRRDYSEARIAEIVQLNPLTTKTPADLYRILAHFDRSNLTNFPALSCISHLSGYVAVTLRDVTYVVSSNVMLKGTSYPVTNLAVDKTMIVTVSPAQHPCEKTEVAHATRSIPIVKNITIGNDCEYCKSAIMEYDEVNGLSNIVYLADTADLVLVTNLDNRILASSPRTRYIMMTANGTLMEITSVIIDIRQTSIFMIMLYCSLGVLLLYGLYRLLHMI</sequence>
<proteinExistence type="inferred from homology"/>
<reference key="1">
    <citation type="journal article" date="1996" name="Arch. Virol.">
        <title>Identification and characterization of the guinea-pig cytomegalovirus glycoprotein H gene.</title>
        <authorList>
            <person name="Brady R.C."/>
            <person name="Schleiss M.R."/>
        </authorList>
    </citation>
    <scope>NUCLEOTIDE SEQUENCE [GENOMIC DNA]</scope>
</reference>
<reference key="2">
    <citation type="journal article" date="2008" name="Virol. J.">
        <title>Analysis of the nucleotide sequence of the guinea pig cytomegalovirus (GPCMV) genome.</title>
        <authorList>
            <person name="Schleiss M.R."/>
            <person name="McGregor A."/>
            <person name="Choi K.Y."/>
            <person name="Date S.V."/>
            <person name="Cui X."/>
            <person name="McVoy M.A."/>
        </authorList>
    </citation>
    <scope>NUCLEOTIDE SEQUENCE [LARGE SCALE GENOMIC DNA]</scope>
    <scope>SEQUENCE REVISION</scope>
</reference>
<reference key="3">
    <citation type="journal article" date="2011" name="J. Gen. Virol.">
        <title>Re-evaluation of the genome sequence of guinea pig cytomegalovirus.</title>
        <authorList>
            <person name="Kanai K."/>
            <person name="Yamada S."/>
            <person name="Yamamoto Y."/>
            <person name="Fukui Y."/>
            <person name="Kurane I."/>
            <person name="Inoue N."/>
        </authorList>
    </citation>
    <scope>NUCLEOTIDE SEQUENCE [LARGE SCALE GENOMIC DNA]</scope>
    <source>
        <strain>22122/ATCC-P5</strain>
    </source>
</reference>
<reference key="4">
    <citation type="journal article" date="2013" name="Genome Announc.">
        <title>Complete genome sequence of pathogenic Guinea pig cytomegalovirus from salivary gland homogenates of infected animals.</title>
        <authorList>
            <person name="Yang D."/>
            <person name="Tamburro K."/>
            <person name="Dittmer D."/>
            <person name="Cui X."/>
            <person name="McVoy M.A."/>
            <person name="Hernandez-Alvarado N."/>
            <person name="Schleiss M.R."/>
        </authorList>
    </citation>
    <scope>NUCLEOTIDE SEQUENCE [LARGE SCALE GENOMIC DNA]</scope>
    <source>
        <strain>22122</strain>
    </source>
</reference>
<protein>
    <recommendedName>
        <fullName evidence="1">Envelope glycoprotein H</fullName>
        <shortName evidence="1">gH</shortName>
    </recommendedName>
</protein>
<name>GH_GPCMV</name>
<organism>
    <name type="scientific">Guinea pig cytomegalovirus (strain 22122)</name>
    <name type="common">GPCMV</name>
    <dbReference type="NCBI Taxonomy" id="103920"/>
    <lineage>
        <taxon>Viruses</taxon>
        <taxon>Duplodnaviria</taxon>
        <taxon>Heunggongvirae</taxon>
        <taxon>Peploviricota</taxon>
        <taxon>Herviviricetes</taxon>
        <taxon>Herpesvirales</taxon>
        <taxon>Orthoherpesviridae</taxon>
        <taxon>Betaherpesvirinae</taxon>
        <taxon>Quwivirus</taxon>
        <taxon>Quwivirus caviidbeta2</taxon>
    </lineage>
</organism>
<keyword id="KW-1169">Fusion of virus membrane with host cell membrane</keyword>
<keyword id="KW-1168">Fusion of virus membrane with host membrane</keyword>
<keyword id="KW-0325">Glycoprotein</keyword>
<keyword id="KW-1032">Host cell membrane</keyword>
<keyword id="KW-1039">Host endosome</keyword>
<keyword id="KW-1043">Host membrane</keyword>
<keyword id="KW-0472">Membrane</keyword>
<keyword id="KW-1185">Reference proteome</keyword>
<keyword id="KW-0730">Sialic acid</keyword>
<keyword id="KW-0732">Signal</keyword>
<keyword id="KW-0812">Transmembrane</keyword>
<keyword id="KW-1133">Transmembrane helix</keyword>
<keyword id="KW-0261">Viral envelope protein</keyword>
<keyword id="KW-1162">Viral penetration into host cytoplasm</keyword>
<keyword id="KW-0946">Virion</keyword>
<keyword id="KW-1160">Virus entry into host cell</keyword>
<comment type="function">
    <text evidence="1">The heterodimer glycoprotein H-glycoprotein L is required for the fusion of viral and plasma membranes leading to virus entry into the host cell. Following initial binding to host receptor, membrane fusion is mediated by the fusion machinery composed of gB and the heterodimer gH/gL. May also be involved in the fusion between the virion envelope and the outer nuclear membrane during virion morphogenesis.</text>
</comment>
<comment type="subunit">
    <text evidence="1">Interacts with glycoprotein L (gL); this interaction is necessary for the correct processing and cell surface expression of gH. The heterodimer gH/gL seems to interact with gB trimers during fusion.</text>
</comment>
<comment type="subcellular location">
    <subcellularLocation>
        <location evidence="1">Virion membrane</location>
        <topology evidence="1">Single-pass type I membrane protein</topology>
    </subcellularLocation>
    <subcellularLocation>
        <location evidence="1">Host cell membrane</location>
        <topology evidence="1">Single-pass type I membrane protein</topology>
    </subcellularLocation>
    <subcellularLocation>
        <location evidence="1">Host endosome membrane</location>
        <topology evidence="1">Single-pass type I membrane protein</topology>
    </subcellularLocation>
    <text evidence="1">During virion morphogenesis, this protein probably accumulates in the endosomes and trans-Golgi where secondary envelopment occurs. It is probably transported to the cell surface from where it is endocytosed and directed to the trans-Golgi network (TGN).</text>
</comment>
<comment type="PTM">
    <text evidence="1">N-glycosylated, O-glycosylated, and sialylated.</text>
</comment>
<comment type="similarity">
    <text evidence="1">Belongs to the herpesviridae glycoprotein H family.</text>
</comment>
<evidence type="ECO:0000255" key="1">
    <source>
        <dbReference type="HAMAP-Rule" id="MF_04033"/>
    </source>
</evidence>
<accession>P87730</accession>
<accession>E9RH81</accession>
<gene>
    <name evidence="1" type="primary">gH</name>
    <name type="ORF">UL75</name>
</gene>
<organismHost>
    <name type="scientific">Cavia porcellus</name>
    <name type="common">Guinea pig</name>
    <dbReference type="NCBI Taxonomy" id="10141"/>
</organismHost>
<feature type="signal peptide" evidence="1">
    <location>
        <begin position="1"/>
        <end position="23"/>
    </location>
</feature>
<feature type="chain" id="PRO_0000038254" description="Envelope glycoprotein H" evidence="1">
    <location>
        <begin position="24"/>
        <end position="723"/>
    </location>
</feature>
<feature type="topological domain" description="Virion surface" evidence="1">
    <location>
        <begin position="24"/>
        <end position="700"/>
    </location>
</feature>
<feature type="transmembrane region" description="Helical" evidence="1">
    <location>
        <begin position="701"/>
        <end position="721"/>
    </location>
</feature>
<feature type="topological domain" description="Intravirion" evidence="1">
    <location>
        <begin position="722"/>
        <end position="723"/>
    </location>
</feature>
<feature type="region of interest" description="Interaction with gL" evidence="1">
    <location>
        <begin position="197"/>
        <end position="263"/>
    </location>
</feature>
<feature type="glycosylation site" description="N-linked (GlcNAc...) asparagine; by host" evidence="1">
    <location>
        <position position="39"/>
    </location>
</feature>
<feature type="glycosylation site" description="N-linked (GlcNAc...) asparagine; by host" evidence="1">
    <location>
        <position position="45"/>
    </location>
</feature>
<feature type="glycosylation site" description="N-linked (GlcNAc...) asparagine; by host" evidence="1">
    <location>
        <position position="144"/>
    </location>
</feature>
<feature type="glycosylation site" description="N-linked (GlcNAc...) asparagine; by host" evidence="1">
    <location>
        <position position="174"/>
    </location>
</feature>
<feature type="glycosylation site" description="N-linked (GlcNAc...) asparagine; by host" evidence="1">
    <location>
        <position position="270"/>
    </location>
</feature>
<feature type="glycosylation site" description="N-linked (GlcNAc...) asparagine; by host" evidence="1">
    <location>
        <position position="340"/>
    </location>
</feature>
<feature type="glycosylation site" description="N-linked (GlcNAc...) asparagine; by host" evidence="1">
    <location>
        <position position="411"/>
    </location>
</feature>
<feature type="glycosylation site" description="N-linked (GlcNAc...) asparagine; by host" evidence="1">
    <location>
        <position position="543"/>
    </location>
</feature>
<feature type="glycosylation site" description="N-linked (GlcNAc...) asparagine; by host" evidence="1">
    <location>
        <position position="621"/>
    </location>
</feature>
<feature type="glycosylation site" description="N-linked (GlcNAc...) asparagine; by host" evidence="1">
    <location>
        <position position="681"/>
    </location>
</feature>